<accession>P37787</accession>
<sequence length="163" mass="18646">MLSGYRVFSRRYVKSFPCLSRGFEIETELTIHALELRMKYGEVNTKYGERSEGSVSKLSTWSDGFKILKTIIKLYSLERPLYFFSIIGVLLAALSIILGLPIIVDYIDTGLVRRFPTAFLTASIMLSSIMAFVCGIILHSNTTTRREMKALFYLSEKNYKLIM</sequence>
<feature type="chain" id="PRO_0000066080" description="Uncharacterized protein SF2094/S2216">
    <location>
        <begin position="1"/>
        <end position="163"/>
    </location>
</feature>
<name>Y2094_SHIFL</name>
<organism>
    <name type="scientific">Shigella flexneri</name>
    <dbReference type="NCBI Taxonomy" id="623"/>
    <lineage>
        <taxon>Bacteria</taxon>
        <taxon>Pseudomonadati</taxon>
        <taxon>Pseudomonadota</taxon>
        <taxon>Gammaproteobacteria</taxon>
        <taxon>Enterobacterales</taxon>
        <taxon>Enterobacteriaceae</taxon>
        <taxon>Shigella</taxon>
    </lineage>
</organism>
<proteinExistence type="predicted"/>
<reference key="1">
    <citation type="journal article" date="1994" name="J. Bacteriol.">
        <title>Characterization of the rfc region of Shigella flexneri.</title>
        <authorList>
            <person name="Morona R."/>
            <person name="Mavris M."/>
            <person name="Fallarino A."/>
            <person name="Manning P.A."/>
        </authorList>
    </citation>
    <scope>NUCLEOTIDE SEQUENCE [GENOMIC DNA]</scope>
    <source>
        <strain>PE577 / Serotype 2a</strain>
    </source>
</reference>
<reference key="2">
    <citation type="journal article" date="2002" name="Nucleic Acids Res.">
        <title>Genome sequence of Shigella flexneri 2a: insights into pathogenicity through comparison with genomes of Escherichia coli K12 and O157.</title>
        <authorList>
            <person name="Jin Q."/>
            <person name="Yuan Z."/>
            <person name="Xu J."/>
            <person name="Wang Y."/>
            <person name="Shen Y."/>
            <person name="Lu W."/>
            <person name="Wang J."/>
            <person name="Liu H."/>
            <person name="Yang J."/>
            <person name="Yang F."/>
            <person name="Zhang X."/>
            <person name="Zhang J."/>
            <person name="Yang G."/>
            <person name="Wu H."/>
            <person name="Qu D."/>
            <person name="Dong J."/>
            <person name="Sun L."/>
            <person name="Xue Y."/>
            <person name="Zhao A."/>
            <person name="Gao Y."/>
            <person name="Zhu J."/>
            <person name="Kan B."/>
            <person name="Ding K."/>
            <person name="Chen S."/>
            <person name="Cheng H."/>
            <person name="Yao Z."/>
            <person name="He B."/>
            <person name="Chen R."/>
            <person name="Ma D."/>
            <person name="Qiang B."/>
            <person name="Wen Y."/>
            <person name="Hou Y."/>
            <person name="Yu J."/>
        </authorList>
    </citation>
    <scope>NUCLEOTIDE SEQUENCE [LARGE SCALE GENOMIC DNA]</scope>
    <source>
        <strain>301 / Serotype 2a</strain>
    </source>
</reference>
<reference key="3">
    <citation type="journal article" date="2003" name="Infect. Immun.">
        <title>Complete genome sequence and comparative genomics of Shigella flexneri serotype 2a strain 2457T.</title>
        <authorList>
            <person name="Wei J."/>
            <person name="Goldberg M.B."/>
            <person name="Burland V."/>
            <person name="Venkatesan M.M."/>
            <person name="Deng W."/>
            <person name="Fournier G."/>
            <person name="Mayhew G.F."/>
            <person name="Plunkett G. III"/>
            <person name="Rose D.J."/>
            <person name="Darling A."/>
            <person name="Mau B."/>
            <person name="Perna N.T."/>
            <person name="Payne S.M."/>
            <person name="Runyen-Janecky L.J."/>
            <person name="Zhou S."/>
            <person name="Schwartz D.C."/>
            <person name="Blattner F.R."/>
        </authorList>
    </citation>
    <scope>NUCLEOTIDE SEQUENCE [LARGE SCALE GENOMIC DNA]</scope>
    <source>
        <strain>ATCC 700930 / 2457T / Serotype 2a</strain>
    </source>
</reference>
<protein>
    <recommendedName>
        <fullName>Uncharacterized protein SF2094/S2216</fullName>
    </recommendedName>
    <alternativeName>
        <fullName>ORF10X9</fullName>
    </alternativeName>
</protein>
<dbReference type="EMBL" id="X71970">
    <property type="protein sequence ID" value="CAA50777.1"/>
    <property type="molecule type" value="Genomic_DNA"/>
</dbReference>
<dbReference type="EMBL" id="AE005674">
    <property type="protein sequence ID" value="AAN43633.2"/>
    <property type="molecule type" value="Genomic_DNA"/>
</dbReference>
<dbReference type="EMBL" id="AE014073">
    <property type="protein sequence ID" value="AAP17462.1"/>
    <property type="molecule type" value="Genomic_DNA"/>
</dbReference>
<dbReference type="PIR" id="F36966">
    <property type="entry name" value="F36966"/>
</dbReference>
<dbReference type="STRING" id="198214.SF2094"/>
<dbReference type="PaxDb" id="198214-SF2094"/>
<dbReference type="KEGG" id="sfx:S2216"/>
<dbReference type="PATRIC" id="fig|623.157.peg.2216"/>
<dbReference type="HOGENOM" id="CLU_033536_14_0_6"/>
<dbReference type="Proteomes" id="UP000001006">
    <property type="component" value="Chromosome"/>
</dbReference>
<dbReference type="Proteomes" id="UP000002673">
    <property type="component" value="Chromosome"/>
</dbReference>
<dbReference type="Gene3D" id="3.90.550.10">
    <property type="entry name" value="Spore Coat Polysaccharide Biosynthesis Protein SpsA, Chain A"/>
    <property type="match status" value="1"/>
</dbReference>
<dbReference type="InterPro" id="IPR050256">
    <property type="entry name" value="Glycosyltransferase_2"/>
</dbReference>
<dbReference type="InterPro" id="IPR029044">
    <property type="entry name" value="Nucleotide-diphossugar_trans"/>
</dbReference>
<dbReference type="PANTHER" id="PTHR48090:SF7">
    <property type="entry name" value="RFBJ PROTEIN"/>
    <property type="match status" value="1"/>
</dbReference>
<dbReference type="PANTHER" id="PTHR48090">
    <property type="entry name" value="UNDECAPRENYL-PHOSPHATE 4-DEOXY-4-FORMAMIDO-L-ARABINOSE TRANSFERASE-RELATED"/>
    <property type="match status" value="1"/>
</dbReference>
<gene>
    <name type="ordered locus">SF2094</name>
    <name type="ordered locus">S2216</name>
</gene>
<keyword id="KW-1185">Reference proteome</keyword>